<accession>D2H526</accession>
<evidence type="ECO:0000250" key="1"/>
<evidence type="ECO:0000250" key="2">
    <source>
        <dbReference type="UniProtKB" id="Q14AX6"/>
    </source>
</evidence>
<evidence type="ECO:0000250" key="3">
    <source>
        <dbReference type="UniProtKB" id="Q3MJK5"/>
    </source>
</evidence>
<evidence type="ECO:0000250" key="4">
    <source>
        <dbReference type="UniProtKB" id="Q9NYV4"/>
    </source>
</evidence>
<evidence type="ECO:0000255" key="5">
    <source>
        <dbReference type="PROSITE-ProRule" id="PRU00159"/>
    </source>
</evidence>
<evidence type="ECO:0000255" key="6">
    <source>
        <dbReference type="PROSITE-ProRule" id="PRU10027"/>
    </source>
</evidence>
<evidence type="ECO:0000256" key="7">
    <source>
        <dbReference type="SAM" id="MobiDB-lite"/>
    </source>
</evidence>
<evidence type="ECO:0000305" key="8"/>
<organism>
    <name type="scientific">Ailuropoda melanoleuca</name>
    <name type="common">Giant panda</name>
    <dbReference type="NCBI Taxonomy" id="9646"/>
    <lineage>
        <taxon>Eukaryota</taxon>
        <taxon>Metazoa</taxon>
        <taxon>Chordata</taxon>
        <taxon>Craniata</taxon>
        <taxon>Vertebrata</taxon>
        <taxon>Euteleostomi</taxon>
        <taxon>Mammalia</taxon>
        <taxon>Eutheria</taxon>
        <taxon>Laurasiatheria</taxon>
        <taxon>Carnivora</taxon>
        <taxon>Caniformia</taxon>
        <taxon>Ursidae</taxon>
        <taxon>Ailuropoda</taxon>
    </lineage>
</organism>
<sequence>MPNPERHGGKKDGSGGASGTLQPSSGGGSSNSRERHRLVSKHKRHKSKHSKDMGLVTPEAAPLGTIIKPLVEYDDISSDSDTFSDDMAFKLDRRENDERRGTDRSDRLHKHRHHQHRRSRDLLKTKQTEKEKNQEVSSKSGSMKDRISGSSKRSNEENEDYGKAQISKSSSNKESRSSKLHKEKTRKERELKSGHKDRSKSHRKRETPKSYKTVDSPKRRSRSPHRKWSDSPKQDDSPSGASYGQDYDLSPPRSHTSSNYDSYKKSPGSTSRRQSISPPYKEPSAYQSSTRSPSPYSRRQRSVSPYSRRRSSSYERSGSYSGRSPSPYGRRRSSSPFMSKRSLSRSPLPSRKSMKSRSRSPAYSRHSSSHSKKKRSGSRSRHSSISPVRLPLNSSLGAELSRKKKERAAAAAAAKMDGKESKGSPIFLPRKENSLVEAKDSGLESKKLTRGVKLEKSAPDTELVNIPHLNTEVKNSLDTGKVKLDENSEKHPIKDLKAQGSRDSKPIALKEEIVTPKETETSEKETPPPVPAVTSPPPPLPTTSPPPQTPPLPPLPPLPAIPQQPPLPPPQPAFSHVLASSTSTLPPSTHPRTSTLSSQANSQPLAQVSVKTQVSVTAAIPHLKTSTLPPLPLPPLLPGDDDMDSPKETPPSKPVKKEKEQRPRHLLTDLPLPPELPGGDPSPPDSPEPKAVTPPQQPYKKRPKICCPRYGERRQTESDWGKRCVDKFDIIGIIGEGTYGQVYKAKDKDTGELVALKKVRLDNEKEGFPITAIREIKILRQLIHRSVVNMKEIVTDKQDALDFKKDKGAFYLVFEYMDHDLMGLLESGLVHFSEDHIKSFMKQLMEGLDYCHKKNFLHRDIKCSNILLNNSGQIKLADFGLARLYNSEESRPYTNKVITLWYRPPELLLGEERYTPAIDVWSCGCILGELFTKKPIFQANLELAQLELISRLCGSPCPAVWPDVIKLPYFNTMKPKKQYRRRLREEFSFIPSAALDLLDHMLTLDPSKRCTAEQTLQSDFLKDVELSKMDPPDLPHWQDCHELWSKKRRRQRQSGVVIEEPPPSKASRKETTSGTSAEPVKNSSPAPPQPASGKVEPGTGDAIGLGDITQQLNQSELAVLLNLLQSQTDLSIPQMAQLLNIHSNPEMQQQLEALNQSISALTEATSQQQDSEHMAPEESLKEAPPALVVQPSAEQTTSEASSTPADMQNMLAVLLSQLMKTQEPAGSLEENNSDKNSGPQGPRRTPTMPQEEAAACPPHILPPEKRPPEPPGPPPPPPPPPLIEGDLSSAPQELNPAVTAALLQLLSQPEAEPPGHLPHEHQALRPMEYSTRPHPNRTYGNTDGPETGFSATDTDERNSGPALTESLTQTLVKNRTFSGSVSHLGESSSYQGTGSVQFPGDQDLRFARVPLPLHSVVGQPFLKAEGSSNSVVHAETKLQNYGELGPGTTGASSSGAGLNWGGSAQSSAYGKLYRGPTRVPPRGGRGRGVPY</sequence>
<protein>
    <recommendedName>
        <fullName>Cyclin-dependent kinase 12</fullName>
        <ecNumber>2.7.11.22</ecNumber>
        <ecNumber>2.7.11.23</ecNumber>
    </recommendedName>
    <alternativeName>
        <fullName>Cell division protein kinase 12</fullName>
    </alternativeName>
</protein>
<gene>
    <name type="primary">CDK12</name>
    <name type="ORF">PANDA_004952</name>
</gene>
<name>CDK12_AILME</name>
<reference key="1">
    <citation type="journal article" date="2010" name="Nature">
        <title>The sequence and de novo assembly of the giant panda genome.</title>
        <authorList>
            <person name="Li R."/>
            <person name="Fan W."/>
            <person name="Tian G."/>
            <person name="Zhu H."/>
            <person name="He L."/>
            <person name="Cai J."/>
            <person name="Huang Q."/>
            <person name="Cai Q."/>
            <person name="Li B."/>
            <person name="Bai Y."/>
            <person name="Zhang Z."/>
            <person name="Zhang Y."/>
            <person name="Wang W."/>
            <person name="Li J."/>
            <person name="Wei F."/>
            <person name="Li H."/>
            <person name="Jian M."/>
            <person name="Li J."/>
            <person name="Zhang Z."/>
            <person name="Nielsen R."/>
            <person name="Li D."/>
            <person name="Gu W."/>
            <person name="Yang Z."/>
            <person name="Xuan Z."/>
            <person name="Ryder O.A."/>
            <person name="Leung F.C."/>
            <person name="Zhou Y."/>
            <person name="Cao J."/>
            <person name="Sun X."/>
            <person name="Fu Y."/>
            <person name="Fang X."/>
            <person name="Guo X."/>
            <person name="Wang B."/>
            <person name="Hou R."/>
            <person name="Shen F."/>
            <person name="Mu B."/>
            <person name="Ni P."/>
            <person name="Lin R."/>
            <person name="Qian W."/>
            <person name="Wang G."/>
            <person name="Yu C."/>
            <person name="Nie W."/>
            <person name="Wang J."/>
            <person name="Wu Z."/>
            <person name="Liang H."/>
            <person name="Min J."/>
            <person name="Wu Q."/>
            <person name="Cheng S."/>
            <person name="Ruan J."/>
            <person name="Wang M."/>
            <person name="Shi Z."/>
            <person name="Wen M."/>
            <person name="Liu B."/>
            <person name="Ren X."/>
            <person name="Zheng H."/>
            <person name="Dong D."/>
            <person name="Cook K."/>
            <person name="Shan G."/>
            <person name="Zhang H."/>
            <person name="Kosiol C."/>
            <person name="Xie X."/>
            <person name="Lu Z."/>
            <person name="Zheng H."/>
            <person name="Li Y."/>
            <person name="Steiner C.C."/>
            <person name="Lam T.T."/>
            <person name="Lin S."/>
            <person name="Zhang Q."/>
            <person name="Li G."/>
            <person name="Tian J."/>
            <person name="Gong T."/>
            <person name="Liu H."/>
            <person name="Zhang D."/>
            <person name="Fang L."/>
            <person name="Ye C."/>
            <person name="Zhang J."/>
            <person name="Hu W."/>
            <person name="Xu A."/>
            <person name="Ren Y."/>
            <person name="Zhang G."/>
            <person name="Bruford M.W."/>
            <person name="Li Q."/>
            <person name="Ma L."/>
            <person name="Guo Y."/>
            <person name="An N."/>
            <person name="Hu Y."/>
            <person name="Zheng Y."/>
            <person name="Shi Y."/>
            <person name="Li Z."/>
            <person name="Liu Q."/>
            <person name="Chen Y."/>
            <person name="Zhao J."/>
            <person name="Qu N."/>
            <person name="Zhao S."/>
            <person name="Tian F."/>
            <person name="Wang X."/>
            <person name="Wang H."/>
            <person name="Xu L."/>
            <person name="Liu X."/>
            <person name="Vinar T."/>
            <person name="Wang Y."/>
            <person name="Lam T.W."/>
            <person name="Yiu S.M."/>
            <person name="Liu S."/>
            <person name="Zhang H."/>
            <person name="Li D."/>
            <person name="Huang Y."/>
            <person name="Wang X."/>
            <person name="Yang G."/>
            <person name="Jiang Z."/>
            <person name="Wang J."/>
            <person name="Qin N."/>
            <person name="Li L."/>
            <person name="Li J."/>
            <person name="Bolund L."/>
            <person name="Kristiansen K."/>
            <person name="Wong G.K."/>
            <person name="Olson M."/>
            <person name="Zhang X."/>
            <person name="Li S."/>
            <person name="Yang H."/>
            <person name="Wang J."/>
            <person name="Wang J."/>
        </authorList>
    </citation>
    <scope>NUCLEOTIDE SEQUENCE [LARGE SCALE GENOMIC DNA]</scope>
</reference>
<dbReference type="EC" id="2.7.11.22"/>
<dbReference type="EC" id="2.7.11.23"/>
<dbReference type="EMBL" id="GL192497">
    <property type="protein sequence ID" value="EFB19924.1"/>
    <property type="molecule type" value="Genomic_DNA"/>
</dbReference>
<dbReference type="RefSeq" id="XP_002916839.1">
    <property type="nucleotide sequence ID" value="XM_002916793.4"/>
</dbReference>
<dbReference type="SMR" id="D2H526"/>
<dbReference type="STRING" id="9646.ENSAMEP00000004181"/>
<dbReference type="Ensembl" id="ENSAMET00000004348.2">
    <property type="protein sequence ID" value="ENSAMEP00000004181.1"/>
    <property type="gene ID" value="ENSAMEG00000003944.2"/>
</dbReference>
<dbReference type="GeneID" id="100467815"/>
<dbReference type="KEGG" id="aml:100467815"/>
<dbReference type="CTD" id="51755"/>
<dbReference type="eggNOG" id="KOG0600">
    <property type="taxonomic scope" value="Eukaryota"/>
</dbReference>
<dbReference type="GeneTree" id="ENSGT00940000157595"/>
<dbReference type="HOGENOM" id="CLU_004166_2_1_1"/>
<dbReference type="InParanoid" id="D2H526"/>
<dbReference type="OMA" id="HWGAPAQ"/>
<dbReference type="OrthoDB" id="28397at2759"/>
<dbReference type="TreeFam" id="TF101060"/>
<dbReference type="Proteomes" id="UP000008912">
    <property type="component" value="Unassembled WGS sequence"/>
</dbReference>
<dbReference type="GO" id="GO:0002944">
    <property type="term" value="C:cyclin K-CDK12 complex"/>
    <property type="evidence" value="ECO:0007669"/>
    <property type="project" value="Ensembl"/>
</dbReference>
<dbReference type="GO" id="GO:0008024">
    <property type="term" value="C:cyclin/CDK positive transcription elongation factor complex"/>
    <property type="evidence" value="ECO:0007669"/>
    <property type="project" value="TreeGrafter"/>
</dbReference>
<dbReference type="GO" id="GO:0019908">
    <property type="term" value="C:nuclear cyclin-dependent protein kinase holoenzyme complex"/>
    <property type="evidence" value="ECO:0000250"/>
    <property type="project" value="UniProtKB"/>
</dbReference>
<dbReference type="GO" id="GO:0016607">
    <property type="term" value="C:nuclear speck"/>
    <property type="evidence" value="ECO:0000250"/>
    <property type="project" value="UniProtKB"/>
</dbReference>
<dbReference type="GO" id="GO:0005524">
    <property type="term" value="F:ATP binding"/>
    <property type="evidence" value="ECO:0007669"/>
    <property type="project" value="UniProtKB-KW"/>
</dbReference>
<dbReference type="GO" id="GO:0030332">
    <property type="term" value="F:cyclin binding"/>
    <property type="evidence" value="ECO:0007669"/>
    <property type="project" value="Ensembl"/>
</dbReference>
<dbReference type="GO" id="GO:0004693">
    <property type="term" value="F:cyclin-dependent protein serine/threonine kinase activity"/>
    <property type="evidence" value="ECO:0007669"/>
    <property type="project" value="UniProtKB-EC"/>
</dbReference>
<dbReference type="GO" id="GO:0019901">
    <property type="term" value="F:protein kinase binding"/>
    <property type="evidence" value="ECO:0007669"/>
    <property type="project" value="Ensembl"/>
</dbReference>
<dbReference type="GO" id="GO:0106310">
    <property type="term" value="F:protein serine kinase activity"/>
    <property type="evidence" value="ECO:0007669"/>
    <property type="project" value="RHEA"/>
</dbReference>
<dbReference type="GO" id="GO:0008353">
    <property type="term" value="F:RNA polymerase II CTD heptapeptide repeat kinase activity"/>
    <property type="evidence" value="ECO:0000250"/>
    <property type="project" value="UniProtKB"/>
</dbReference>
<dbReference type="GO" id="GO:0071391">
    <property type="term" value="P:cellular response to estrogen stimulus"/>
    <property type="evidence" value="ECO:0007669"/>
    <property type="project" value="Ensembl"/>
</dbReference>
<dbReference type="GO" id="GO:0006397">
    <property type="term" value="P:mRNA processing"/>
    <property type="evidence" value="ECO:0007669"/>
    <property type="project" value="UniProtKB-KW"/>
</dbReference>
<dbReference type="GO" id="GO:0033147">
    <property type="term" value="P:negative regulation of intracellular estrogen receptor signaling pathway"/>
    <property type="evidence" value="ECO:0007669"/>
    <property type="project" value="Ensembl"/>
</dbReference>
<dbReference type="GO" id="GO:0043409">
    <property type="term" value="P:negative regulation of MAPK cascade"/>
    <property type="evidence" value="ECO:0007669"/>
    <property type="project" value="Ensembl"/>
</dbReference>
<dbReference type="GO" id="GO:2000737">
    <property type="term" value="P:negative regulation of stem cell differentiation"/>
    <property type="evidence" value="ECO:0007669"/>
    <property type="project" value="Ensembl"/>
</dbReference>
<dbReference type="GO" id="GO:0045944">
    <property type="term" value="P:positive regulation of transcription by RNA polymerase II"/>
    <property type="evidence" value="ECO:0000250"/>
    <property type="project" value="UniProtKB"/>
</dbReference>
<dbReference type="GO" id="GO:0032968">
    <property type="term" value="P:positive regulation of transcription elongation by RNA polymerase II"/>
    <property type="evidence" value="ECO:0007669"/>
    <property type="project" value="Ensembl"/>
</dbReference>
<dbReference type="GO" id="GO:0043405">
    <property type="term" value="P:regulation of MAP kinase activity"/>
    <property type="evidence" value="ECO:0000250"/>
    <property type="project" value="UniProtKB"/>
</dbReference>
<dbReference type="GO" id="GO:0008380">
    <property type="term" value="P:RNA splicing"/>
    <property type="evidence" value="ECO:0000250"/>
    <property type="project" value="UniProtKB"/>
</dbReference>
<dbReference type="GO" id="GO:0006366">
    <property type="term" value="P:transcription by RNA polymerase II"/>
    <property type="evidence" value="ECO:0007669"/>
    <property type="project" value="Ensembl"/>
</dbReference>
<dbReference type="CDD" id="cd07864">
    <property type="entry name" value="STKc_CDK12"/>
    <property type="match status" value="1"/>
</dbReference>
<dbReference type="FunFam" id="1.10.510.10:FF:000102">
    <property type="entry name" value="cyclin-dependent kinase 12 isoform X1"/>
    <property type="match status" value="1"/>
</dbReference>
<dbReference type="FunFam" id="3.30.200.20:FF:000074">
    <property type="entry name" value="cyclin-dependent kinase 12 isoform X2"/>
    <property type="match status" value="1"/>
</dbReference>
<dbReference type="Gene3D" id="3.30.200.20">
    <property type="entry name" value="Phosphorylase Kinase, domain 1"/>
    <property type="match status" value="1"/>
</dbReference>
<dbReference type="Gene3D" id="1.10.510.10">
    <property type="entry name" value="Transferase(Phosphotransferase) domain 1"/>
    <property type="match status" value="1"/>
</dbReference>
<dbReference type="InterPro" id="IPR050108">
    <property type="entry name" value="CDK"/>
</dbReference>
<dbReference type="InterPro" id="IPR011009">
    <property type="entry name" value="Kinase-like_dom_sf"/>
</dbReference>
<dbReference type="InterPro" id="IPR000719">
    <property type="entry name" value="Prot_kinase_dom"/>
</dbReference>
<dbReference type="InterPro" id="IPR017441">
    <property type="entry name" value="Protein_kinase_ATP_BS"/>
</dbReference>
<dbReference type="InterPro" id="IPR008271">
    <property type="entry name" value="Ser/Thr_kinase_AS"/>
</dbReference>
<dbReference type="PANTHER" id="PTHR24056">
    <property type="entry name" value="CELL DIVISION PROTEIN KINASE"/>
    <property type="match status" value="1"/>
</dbReference>
<dbReference type="PANTHER" id="PTHR24056:SF126">
    <property type="entry name" value="CYCLIN-DEPENDENT KINASE 12"/>
    <property type="match status" value="1"/>
</dbReference>
<dbReference type="Pfam" id="PF00069">
    <property type="entry name" value="Pkinase"/>
    <property type="match status" value="1"/>
</dbReference>
<dbReference type="SMART" id="SM00220">
    <property type="entry name" value="S_TKc"/>
    <property type="match status" value="1"/>
</dbReference>
<dbReference type="SUPFAM" id="SSF56112">
    <property type="entry name" value="Protein kinase-like (PK-like)"/>
    <property type="match status" value="1"/>
</dbReference>
<dbReference type="PROSITE" id="PS00107">
    <property type="entry name" value="PROTEIN_KINASE_ATP"/>
    <property type="match status" value="1"/>
</dbReference>
<dbReference type="PROSITE" id="PS50011">
    <property type="entry name" value="PROTEIN_KINASE_DOM"/>
    <property type="match status" value="1"/>
</dbReference>
<dbReference type="PROSITE" id="PS00108">
    <property type="entry name" value="PROTEIN_KINASE_ST"/>
    <property type="match status" value="1"/>
</dbReference>
<proteinExistence type="inferred from homology"/>
<feature type="chain" id="PRO_0000406957" description="Cyclin-dependent kinase 12">
    <location>
        <begin position="1"/>
        <end position="1491"/>
    </location>
</feature>
<feature type="domain" description="Protein kinase" evidence="5">
    <location>
        <begin position="728"/>
        <end position="1021"/>
    </location>
</feature>
<feature type="region of interest" description="Disordered" evidence="7">
    <location>
        <begin position="1"/>
        <end position="704"/>
    </location>
</feature>
<feature type="region of interest" description="Disordered" evidence="7">
    <location>
        <begin position="1051"/>
        <end position="1105"/>
    </location>
</feature>
<feature type="region of interest" description="Disordered" evidence="7">
    <location>
        <begin position="1162"/>
        <end position="1204"/>
    </location>
</feature>
<feature type="region of interest" description="Disordered" evidence="7">
    <location>
        <begin position="1221"/>
        <end position="1371"/>
    </location>
</feature>
<feature type="region of interest" description="Disordered" evidence="7">
    <location>
        <begin position="1469"/>
        <end position="1491"/>
    </location>
</feature>
<feature type="compositionally biased region" description="Basic and acidic residues" evidence="7">
    <location>
        <begin position="1"/>
        <end position="13"/>
    </location>
</feature>
<feature type="compositionally biased region" description="Basic residues" evidence="7">
    <location>
        <begin position="34"/>
        <end position="49"/>
    </location>
</feature>
<feature type="compositionally biased region" description="Acidic residues" evidence="7">
    <location>
        <begin position="72"/>
        <end position="84"/>
    </location>
</feature>
<feature type="compositionally biased region" description="Basic and acidic residues" evidence="7">
    <location>
        <begin position="87"/>
        <end position="106"/>
    </location>
</feature>
<feature type="compositionally biased region" description="Basic residues" evidence="7">
    <location>
        <begin position="107"/>
        <end position="119"/>
    </location>
</feature>
<feature type="compositionally biased region" description="Basic and acidic residues" evidence="7">
    <location>
        <begin position="120"/>
        <end position="134"/>
    </location>
</feature>
<feature type="compositionally biased region" description="Basic and acidic residues" evidence="7">
    <location>
        <begin position="142"/>
        <end position="162"/>
    </location>
</feature>
<feature type="compositionally biased region" description="Basic and acidic residues" evidence="7">
    <location>
        <begin position="185"/>
        <end position="196"/>
    </location>
</feature>
<feature type="compositionally biased region" description="Basic residues" evidence="7">
    <location>
        <begin position="197"/>
        <end position="206"/>
    </location>
</feature>
<feature type="compositionally biased region" description="Basic and acidic residues" evidence="7">
    <location>
        <begin position="227"/>
        <end position="236"/>
    </location>
</feature>
<feature type="compositionally biased region" description="Polar residues" evidence="7">
    <location>
        <begin position="253"/>
        <end position="277"/>
    </location>
</feature>
<feature type="compositionally biased region" description="Low complexity" evidence="7">
    <location>
        <begin position="288"/>
        <end position="306"/>
    </location>
</feature>
<feature type="compositionally biased region" description="Low complexity" evidence="7">
    <location>
        <begin position="314"/>
        <end position="351"/>
    </location>
</feature>
<feature type="compositionally biased region" description="Basic residues" evidence="7">
    <location>
        <begin position="367"/>
        <end position="382"/>
    </location>
</feature>
<feature type="compositionally biased region" description="Basic and acidic residues" evidence="7">
    <location>
        <begin position="429"/>
        <end position="459"/>
    </location>
</feature>
<feature type="compositionally biased region" description="Basic and acidic residues" evidence="7">
    <location>
        <begin position="480"/>
        <end position="526"/>
    </location>
</feature>
<feature type="compositionally biased region" description="Pro residues" evidence="7">
    <location>
        <begin position="527"/>
        <end position="572"/>
    </location>
</feature>
<feature type="compositionally biased region" description="Low complexity" evidence="7">
    <location>
        <begin position="578"/>
        <end position="598"/>
    </location>
</feature>
<feature type="compositionally biased region" description="Polar residues" evidence="7">
    <location>
        <begin position="599"/>
        <end position="616"/>
    </location>
</feature>
<feature type="compositionally biased region" description="Basic and acidic residues" evidence="7">
    <location>
        <begin position="655"/>
        <end position="667"/>
    </location>
</feature>
<feature type="compositionally biased region" description="Pro residues" evidence="7">
    <location>
        <begin position="671"/>
        <end position="686"/>
    </location>
</feature>
<feature type="compositionally biased region" description="Polar residues" evidence="7">
    <location>
        <begin position="1072"/>
        <end position="1084"/>
    </location>
</feature>
<feature type="compositionally biased region" description="Basic and acidic residues" evidence="7">
    <location>
        <begin position="1170"/>
        <end position="1181"/>
    </location>
</feature>
<feature type="compositionally biased region" description="Low complexity" evidence="7">
    <location>
        <begin position="1191"/>
        <end position="1204"/>
    </location>
</feature>
<feature type="compositionally biased region" description="Pro residues" evidence="7">
    <location>
        <begin position="1269"/>
        <end position="1282"/>
    </location>
</feature>
<feature type="compositionally biased region" description="Low complexity" evidence="7">
    <location>
        <begin position="1474"/>
        <end position="1491"/>
    </location>
</feature>
<feature type="active site" description="Proton acceptor" evidence="5 6">
    <location>
        <position position="860"/>
    </location>
</feature>
<feature type="binding site" evidence="5">
    <location>
        <begin position="734"/>
        <end position="742"/>
    </location>
    <ligand>
        <name>ATP</name>
        <dbReference type="ChEBI" id="CHEBI:30616"/>
    </ligand>
</feature>
<feature type="binding site" evidence="5">
    <location>
        <position position="757"/>
    </location>
    <ligand>
        <name>ATP</name>
        <dbReference type="ChEBI" id="CHEBI:30616"/>
    </ligand>
</feature>
<feature type="binding site" evidence="5">
    <location>
        <begin position="815"/>
        <end position="820"/>
    </location>
    <ligand>
        <name>ATP</name>
        <dbReference type="ChEBI" id="CHEBI:30616"/>
    </ligand>
</feature>
<feature type="binding site" evidence="5">
    <location>
        <position position="1041"/>
    </location>
    <ligand>
        <name>ATP</name>
        <dbReference type="ChEBI" id="CHEBI:30616"/>
    </ligand>
</feature>
<feature type="modified residue" description="Phosphothreonine" evidence="4">
    <location>
        <position position="57"/>
    </location>
</feature>
<feature type="modified residue" description="Phosphotyrosine" evidence="4">
    <location>
        <position position="73"/>
    </location>
</feature>
<feature type="modified residue" description="Phosphoserine" evidence="4">
    <location>
        <position position="237"/>
    </location>
</feature>
<feature type="modified residue" description="Phosphoserine" evidence="4">
    <location>
        <position position="250"/>
    </location>
</feature>
<feature type="modified residue" description="Phosphoserine" evidence="4">
    <location>
        <position position="266"/>
    </location>
</feature>
<feature type="modified residue" description="Phosphoserine" evidence="4">
    <location>
        <position position="275"/>
    </location>
</feature>
<feature type="modified residue" description="Phosphoserine" evidence="4">
    <location>
        <position position="277"/>
    </location>
</feature>
<feature type="modified residue" description="Phosphoserine" evidence="4">
    <location>
        <position position="302"/>
    </location>
</feature>
<feature type="modified residue" description="Phosphoserine" evidence="4">
    <location>
        <position position="304"/>
    </location>
</feature>
<feature type="modified residue" description="Phosphoserine" evidence="4">
    <location>
        <position position="311"/>
    </location>
</feature>
<feature type="modified residue" description="Phosphoserine" evidence="4">
    <location>
        <position position="313"/>
    </location>
</feature>
<feature type="modified residue" description="Phosphoserine" evidence="4">
    <location>
        <position position="319"/>
    </location>
</feature>
<feature type="modified residue" description="Phosphoserine" evidence="4">
    <location>
        <position position="324"/>
    </location>
</feature>
<feature type="modified residue" description="Phosphoserine" evidence="4">
    <location>
        <position position="326"/>
    </location>
</feature>
<feature type="modified residue" description="Phosphoserine" evidence="4">
    <location>
        <position position="333"/>
    </location>
</feature>
<feature type="modified residue" description="Phosphoserine" evidence="4">
    <location>
        <position position="334"/>
    </location>
</feature>
<feature type="modified residue" description="Phosphoserine" evidence="4">
    <location>
        <position position="335"/>
    </location>
</feature>
<feature type="modified residue" description="Phosphoserine" evidence="4">
    <location>
        <position position="339"/>
    </location>
</feature>
<feature type="modified residue" description="Phosphoserine" evidence="4">
    <location>
        <position position="342"/>
    </location>
</feature>
<feature type="modified residue" description="Phosphoserine" evidence="4">
    <location>
        <position position="344"/>
    </location>
</feature>
<feature type="modified residue" description="Phosphoserine" evidence="4">
    <location>
        <position position="346"/>
    </location>
</feature>
<feature type="modified residue" description="Phosphoserine" evidence="4">
    <location>
        <position position="384"/>
    </location>
</feature>
<feature type="modified residue" description="Phosphoserine" evidence="4">
    <location>
        <position position="386"/>
    </location>
</feature>
<feature type="modified residue" description="Phosphoserine" evidence="4">
    <location>
        <position position="401"/>
    </location>
</feature>
<feature type="modified residue" description="Phosphoserine" evidence="4">
    <location>
        <position position="421"/>
    </location>
</feature>
<feature type="modified residue" description="Phosphoserine" evidence="4">
    <location>
        <position position="424"/>
    </location>
</feature>
<feature type="modified residue" description="Phosphothreonine" evidence="4">
    <location>
        <position position="515"/>
    </location>
</feature>
<feature type="modified residue" description="Phosphoserine" evidence="4">
    <location>
        <position position="615"/>
    </location>
</feature>
<feature type="modified residue" description="Phosphoserine" evidence="3">
    <location>
        <position position="645"/>
    </location>
</feature>
<feature type="modified residue" description="Phosphoserine" evidence="4">
    <location>
        <position position="682"/>
    </location>
</feature>
<feature type="modified residue" description="Phosphoserine" evidence="4">
    <location>
        <position position="686"/>
    </location>
</feature>
<feature type="modified residue" description="Phosphothreonine" evidence="4">
    <location>
        <position position="693"/>
    </location>
</feature>
<feature type="modified residue" description="Phosphoserine" evidence="4">
    <location>
        <position position="890"/>
    </location>
</feature>
<feature type="modified residue" description="Phosphothreonine" evidence="4">
    <location>
        <position position="894"/>
    </location>
</feature>
<feature type="modified residue" description="Phosphoserine" evidence="4">
    <location>
        <position position="1054"/>
    </location>
</feature>
<feature type="modified residue" description="Phosphoserine" evidence="4">
    <location>
        <position position="1084"/>
    </location>
</feature>
<feature type="modified residue" description="Phosphothreonine" evidence="4">
    <location>
        <position position="1245"/>
    </location>
</feature>
<feature type="modified residue" description="Phosphothreonine" evidence="2">
    <location>
        <position position="1247"/>
    </location>
</feature>
<feature type="cross-link" description="Glycyl lysine isopeptide (Lys-Gly) (interchain with G-Cter in SUMO2)" evidence="4">
    <location>
        <position position="264"/>
    </location>
</feature>
<feature type="cross-link" description="Glycyl lysine isopeptide (Lys-Gly) (interchain with G-Cter in SUMO2)" evidence="4">
    <location>
        <position position="510"/>
    </location>
</feature>
<feature type="cross-link" description="Glycyl lysine isopeptide (Lys-Gly) (interchain with G-Cter in SUMO2)" evidence="4">
    <location>
        <position position="656"/>
    </location>
</feature>
<keyword id="KW-0067">ATP-binding</keyword>
<keyword id="KW-1017">Isopeptide bond</keyword>
<keyword id="KW-0418">Kinase</keyword>
<keyword id="KW-0507">mRNA processing</keyword>
<keyword id="KW-0508">mRNA splicing</keyword>
<keyword id="KW-0547">Nucleotide-binding</keyword>
<keyword id="KW-0539">Nucleus</keyword>
<keyword id="KW-0597">Phosphoprotein</keyword>
<keyword id="KW-1185">Reference proteome</keyword>
<keyword id="KW-0723">Serine/threonine-protein kinase</keyword>
<keyword id="KW-0808">Transferase</keyword>
<keyword id="KW-0832">Ubl conjugation</keyword>
<comment type="function">
    <text evidence="1">Cyclin-dependent kinase that phosphorylates the C-terminal domain (CTD) of the large subunit of RNA polymerase II (POLR2A), thereby acting as a key regulator of transcription elongation. Regulates the expression of genes involved in DNA repair and is required for the maintenance of genomic stability. Preferentially phosphorylates 'Ser-5' in CTD repeats that are already phosphorylated at 'Ser-7', but can also phosphorylate 'Ser-2'. Required for RNA splicing, possibly by phosphorylating SRSF1/SF2. Involved in regulation of MAP kinase activity, possibly leading to affect the response to estrogen inhibitors (By similarity).</text>
</comment>
<comment type="catalytic activity">
    <reaction>
        <text>[DNA-directed RNA polymerase] + ATP = phospho-[DNA-directed RNA polymerase] + ADP + H(+)</text>
        <dbReference type="Rhea" id="RHEA:10216"/>
        <dbReference type="Rhea" id="RHEA-COMP:11321"/>
        <dbReference type="Rhea" id="RHEA-COMP:11322"/>
        <dbReference type="ChEBI" id="CHEBI:15378"/>
        <dbReference type="ChEBI" id="CHEBI:30616"/>
        <dbReference type="ChEBI" id="CHEBI:43176"/>
        <dbReference type="ChEBI" id="CHEBI:68546"/>
        <dbReference type="ChEBI" id="CHEBI:456216"/>
        <dbReference type="EC" id="2.7.11.23"/>
    </reaction>
</comment>
<comment type="catalytic activity">
    <reaction>
        <text>L-seryl-[protein] + ATP = O-phospho-L-seryl-[protein] + ADP + H(+)</text>
        <dbReference type="Rhea" id="RHEA:17989"/>
        <dbReference type="Rhea" id="RHEA-COMP:9863"/>
        <dbReference type="Rhea" id="RHEA-COMP:11604"/>
        <dbReference type="ChEBI" id="CHEBI:15378"/>
        <dbReference type="ChEBI" id="CHEBI:29999"/>
        <dbReference type="ChEBI" id="CHEBI:30616"/>
        <dbReference type="ChEBI" id="CHEBI:83421"/>
        <dbReference type="ChEBI" id="CHEBI:456216"/>
        <dbReference type="EC" id="2.7.11.22"/>
    </reaction>
</comment>
<comment type="catalytic activity">
    <reaction>
        <text>L-threonyl-[protein] + ATP = O-phospho-L-threonyl-[protein] + ADP + H(+)</text>
        <dbReference type="Rhea" id="RHEA:46608"/>
        <dbReference type="Rhea" id="RHEA-COMP:11060"/>
        <dbReference type="Rhea" id="RHEA-COMP:11605"/>
        <dbReference type="ChEBI" id="CHEBI:15378"/>
        <dbReference type="ChEBI" id="CHEBI:30013"/>
        <dbReference type="ChEBI" id="CHEBI:30616"/>
        <dbReference type="ChEBI" id="CHEBI:61977"/>
        <dbReference type="ChEBI" id="CHEBI:456216"/>
        <dbReference type="EC" id="2.7.11.22"/>
    </reaction>
</comment>
<comment type="subunit">
    <text evidence="1">Interacts with CCNL1 and CCNL2.</text>
</comment>
<comment type="subcellular location">
    <subcellularLocation>
        <location evidence="1">Nucleus</location>
    </subcellularLocation>
    <subcellularLocation>
        <location evidence="1">Nucleus speckle</location>
    </subcellularLocation>
    <text evidence="1">Colocalized with nuclear speckles throughout interphase.</text>
</comment>
<comment type="PTM">
    <text evidence="1">Phosphorylation at Thr-894 increases kinase activity.</text>
</comment>
<comment type="similarity">
    <text evidence="8">Belongs to the protein kinase superfamily. CMGC Ser/Thr protein kinase family. CDC2/CDKX subfamily.</text>
</comment>